<organism>
    <name type="scientific">Listeria monocytogenes serovar 1/2a (strain ATCC BAA-679 / EGD-e)</name>
    <dbReference type="NCBI Taxonomy" id="169963"/>
    <lineage>
        <taxon>Bacteria</taxon>
        <taxon>Bacillati</taxon>
        <taxon>Bacillota</taxon>
        <taxon>Bacilli</taxon>
        <taxon>Bacillales</taxon>
        <taxon>Listeriaceae</taxon>
        <taxon>Listeria</taxon>
    </lineage>
</organism>
<keyword id="KW-0030">Aminoacyl-tRNA synthetase</keyword>
<keyword id="KW-0067">ATP-binding</keyword>
<keyword id="KW-0963">Cytoplasm</keyword>
<keyword id="KW-0436">Ligase</keyword>
<keyword id="KW-0547">Nucleotide-binding</keyword>
<keyword id="KW-0648">Protein biosynthesis</keyword>
<keyword id="KW-1185">Reference proteome</keyword>
<feature type="chain" id="PRO_0000072848" description="Glycine--tRNA ligase alpha subunit">
    <location>
        <begin position="1"/>
        <end position="296"/>
    </location>
</feature>
<name>SYGA_LISMO</name>
<gene>
    <name evidence="1" type="primary">glyQ</name>
    <name type="ordered locus">lmo1459</name>
</gene>
<reference key="1">
    <citation type="journal article" date="2001" name="Science">
        <title>Comparative genomics of Listeria species.</title>
        <authorList>
            <person name="Glaser P."/>
            <person name="Frangeul L."/>
            <person name="Buchrieser C."/>
            <person name="Rusniok C."/>
            <person name="Amend A."/>
            <person name="Baquero F."/>
            <person name="Berche P."/>
            <person name="Bloecker H."/>
            <person name="Brandt P."/>
            <person name="Chakraborty T."/>
            <person name="Charbit A."/>
            <person name="Chetouani F."/>
            <person name="Couve E."/>
            <person name="de Daruvar A."/>
            <person name="Dehoux P."/>
            <person name="Domann E."/>
            <person name="Dominguez-Bernal G."/>
            <person name="Duchaud E."/>
            <person name="Durant L."/>
            <person name="Dussurget O."/>
            <person name="Entian K.-D."/>
            <person name="Fsihi H."/>
            <person name="Garcia-del Portillo F."/>
            <person name="Garrido P."/>
            <person name="Gautier L."/>
            <person name="Goebel W."/>
            <person name="Gomez-Lopez N."/>
            <person name="Hain T."/>
            <person name="Hauf J."/>
            <person name="Jackson D."/>
            <person name="Jones L.-M."/>
            <person name="Kaerst U."/>
            <person name="Kreft J."/>
            <person name="Kuhn M."/>
            <person name="Kunst F."/>
            <person name="Kurapkat G."/>
            <person name="Madueno E."/>
            <person name="Maitournam A."/>
            <person name="Mata Vicente J."/>
            <person name="Ng E."/>
            <person name="Nedjari H."/>
            <person name="Nordsiek G."/>
            <person name="Novella S."/>
            <person name="de Pablos B."/>
            <person name="Perez-Diaz J.-C."/>
            <person name="Purcell R."/>
            <person name="Remmel B."/>
            <person name="Rose M."/>
            <person name="Schlueter T."/>
            <person name="Simoes N."/>
            <person name="Tierrez A."/>
            <person name="Vazquez-Boland J.-A."/>
            <person name="Voss H."/>
            <person name="Wehland J."/>
            <person name="Cossart P."/>
        </authorList>
    </citation>
    <scope>NUCLEOTIDE SEQUENCE [LARGE SCALE GENOMIC DNA]</scope>
    <source>
        <strain>ATCC BAA-679 / EGD-e</strain>
    </source>
</reference>
<dbReference type="EC" id="6.1.1.14" evidence="1"/>
<dbReference type="EMBL" id="AL591979">
    <property type="protein sequence ID" value="CAC99537.1"/>
    <property type="molecule type" value="Genomic_DNA"/>
</dbReference>
<dbReference type="PIR" id="AC1257">
    <property type="entry name" value="AC1257"/>
</dbReference>
<dbReference type="RefSeq" id="NP_464984.1">
    <property type="nucleotide sequence ID" value="NC_003210.1"/>
</dbReference>
<dbReference type="RefSeq" id="WP_003721965.1">
    <property type="nucleotide sequence ID" value="NZ_CP149495.1"/>
</dbReference>
<dbReference type="SMR" id="Q8Y753"/>
<dbReference type="STRING" id="169963.gene:17594116"/>
<dbReference type="PaxDb" id="169963-lmo1459"/>
<dbReference type="EnsemblBacteria" id="CAC99537">
    <property type="protein sequence ID" value="CAC99537"/>
    <property type="gene ID" value="CAC99537"/>
</dbReference>
<dbReference type="GeneID" id="986742"/>
<dbReference type="KEGG" id="lmo:lmo1459"/>
<dbReference type="PATRIC" id="fig|169963.11.peg.1498"/>
<dbReference type="eggNOG" id="COG0752">
    <property type="taxonomic scope" value="Bacteria"/>
</dbReference>
<dbReference type="HOGENOM" id="CLU_057066_1_0_9"/>
<dbReference type="OrthoDB" id="9802183at2"/>
<dbReference type="PhylomeDB" id="Q8Y753"/>
<dbReference type="BioCyc" id="LMON169963:LMO1459-MONOMER"/>
<dbReference type="Proteomes" id="UP000000817">
    <property type="component" value="Chromosome"/>
</dbReference>
<dbReference type="GO" id="GO:0005737">
    <property type="term" value="C:cytoplasm"/>
    <property type="evidence" value="ECO:0007669"/>
    <property type="project" value="UniProtKB-SubCell"/>
</dbReference>
<dbReference type="GO" id="GO:0005524">
    <property type="term" value="F:ATP binding"/>
    <property type="evidence" value="ECO:0007669"/>
    <property type="project" value="UniProtKB-UniRule"/>
</dbReference>
<dbReference type="GO" id="GO:0140096">
    <property type="term" value="F:catalytic activity, acting on a protein"/>
    <property type="evidence" value="ECO:0007669"/>
    <property type="project" value="UniProtKB-ARBA"/>
</dbReference>
<dbReference type="GO" id="GO:0004820">
    <property type="term" value="F:glycine-tRNA ligase activity"/>
    <property type="evidence" value="ECO:0007669"/>
    <property type="project" value="UniProtKB-UniRule"/>
</dbReference>
<dbReference type="GO" id="GO:0016740">
    <property type="term" value="F:transferase activity"/>
    <property type="evidence" value="ECO:0007669"/>
    <property type="project" value="UniProtKB-ARBA"/>
</dbReference>
<dbReference type="GO" id="GO:0006426">
    <property type="term" value="P:glycyl-tRNA aminoacylation"/>
    <property type="evidence" value="ECO:0007669"/>
    <property type="project" value="UniProtKB-UniRule"/>
</dbReference>
<dbReference type="CDD" id="cd00733">
    <property type="entry name" value="GlyRS_alpha_core"/>
    <property type="match status" value="1"/>
</dbReference>
<dbReference type="FunFam" id="3.30.930.10:FF:000006">
    <property type="entry name" value="Glycine--tRNA ligase alpha subunit"/>
    <property type="match status" value="1"/>
</dbReference>
<dbReference type="Gene3D" id="3.30.930.10">
    <property type="entry name" value="Bira Bifunctional Protein, Domain 2"/>
    <property type="match status" value="1"/>
</dbReference>
<dbReference type="Gene3D" id="1.20.58.180">
    <property type="entry name" value="Class II aaRS and biotin synthetases, domain 2"/>
    <property type="match status" value="1"/>
</dbReference>
<dbReference type="HAMAP" id="MF_00254">
    <property type="entry name" value="Gly_tRNA_synth_alpha"/>
    <property type="match status" value="1"/>
</dbReference>
<dbReference type="InterPro" id="IPR045864">
    <property type="entry name" value="aa-tRNA-synth_II/BPL/LPL"/>
</dbReference>
<dbReference type="InterPro" id="IPR006194">
    <property type="entry name" value="Gly-tRNA-synth_heterodimer"/>
</dbReference>
<dbReference type="InterPro" id="IPR002310">
    <property type="entry name" value="Gly-tRNA_ligase_asu"/>
</dbReference>
<dbReference type="NCBIfam" id="TIGR00388">
    <property type="entry name" value="glyQ"/>
    <property type="match status" value="1"/>
</dbReference>
<dbReference type="NCBIfam" id="NF006827">
    <property type="entry name" value="PRK09348.1"/>
    <property type="match status" value="1"/>
</dbReference>
<dbReference type="PANTHER" id="PTHR30075:SF2">
    <property type="entry name" value="GLYCINE--TRNA LIGASE, CHLOROPLASTIC_MITOCHONDRIAL 2"/>
    <property type="match status" value="1"/>
</dbReference>
<dbReference type="PANTHER" id="PTHR30075">
    <property type="entry name" value="GLYCYL-TRNA SYNTHETASE"/>
    <property type="match status" value="1"/>
</dbReference>
<dbReference type="Pfam" id="PF02091">
    <property type="entry name" value="tRNA-synt_2e"/>
    <property type="match status" value="1"/>
</dbReference>
<dbReference type="PRINTS" id="PR01044">
    <property type="entry name" value="TRNASYNTHGA"/>
</dbReference>
<dbReference type="SUPFAM" id="SSF55681">
    <property type="entry name" value="Class II aaRS and biotin synthetases"/>
    <property type="match status" value="1"/>
</dbReference>
<dbReference type="PROSITE" id="PS50861">
    <property type="entry name" value="AA_TRNA_LIGASE_II_GLYAB"/>
    <property type="match status" value="1"/>
</dbReference>
<comment type="catalytic activity">
    <reaction evidence="1">
        <text>tRNA(Gly) + glycine + ATP = glycyl-tRNA(Gly) + AMP + diphosphate</text>
        <dbReference type="Rhea" id="RHEA:16013"/>
        <dbReference type="Rhea" id="RHEA-COMP:9664"/>
        <dbReference type="Rhea" id="RHEA-COMP:9683"/>
        <dbReference type="ChEBI" id="CHEBI:30616"/>
        <dbReference type="ChEBI" id="CHEBI:33019"/>
        <dbReference type="ChEBI" id="CHEBI:57305"/>
        <dbReference type="ChEBI" id="CHEBI:78442"/>
        <dbReference type="ChEBI" id="CHEBI:78522"/>
        <dbReference type="ChEBI" id="CHEBI:456215"/>
        <dbReference type="EC" id="6.1.1.14"/>
    </reaction>
</comment>
<comment type="subunit">
    <text evidence="1">Tetramer of two alpha and two beta subunits.</text>
</comment>
<comment type="subcellular location">
    <subcellularLocation>
        <location evidence="1">Cytoplasm</location>
    </subcellularLocation>
</comment>
<comment type="similarity">
    <text evidence="1">Belongs to the class-II aminoacyl-tRNA synthetase family.</text>
</comment>
<proteinExistence type="inferred from homology"/>
<sequence length="296" mass="34330">MNLQTMIRTLQDYWSEQGCIMLQSYDVEKGAGTMSPYTFLKAIGPEPWKAGYVEPSRRPADGRYGENPNRLFQHHQFQVVMKPSPDNIQELYLGSLEKLGINPLEHDIRFVEDNWENPSLGCAGLGWEVWLDGMEITQFTYFQQVGGLECFPVTSEITYGVERLASYIQDKENVFDLEWTEGISYRDIFFQAEFENSTYAFETSNTDMLLTLFDTYEREATRQMQDGLVFPAYDYVLKCSHTFNLLDARGVVSVTERAQYIGRIRNLARRIAKTFYESREKLGFPLLKEEGGKRHE</sequence>
<protein>
    <recommendedName>
        <fullName evidence="1">Glycine--tRNA ligase alpha subunit</fullName>
        <ecNumber evidence="1">6.1.1.14</ecNumber>
    </recommendedName>
    <alternativeName>
        <fullName evidence="1">Glycyl-tRNA synthetase alpha subunit</fullName>
        <shortName evidence="1">GlyRS</shortName>
    </alternativeName>
</protein>
<evidence type="ECO:0000255" key="1">
    <source>
        <dbReference type="HAMAP-Rule" id="MF_00254"/>
    </source>
</evidence>
<accession>Q8Y753</accession>